<feature type="chain" id="PRO_1000019832" description="Serine--tRNA ligase">
    <location>
        <begin position="1"/>
        <end position="428"/>
    </location>
</feature>
<feature type="binding site" evidence="1">
    <location>
        <begin position="231"/>
        <end position="233"/>
    </location>
    <ligand>
        <name>L-serine</name>
        <dbReference type="ChEBI" id="CHEBI:33384"/>
    </ligand>
</feature>
<feature type="binding site" evidence="1">
    <location>
        <begin position="262"/>
        <end position="264"/>
    </location>
    <ligand>
        <name>ATP</name>
        <dbReference type="ChEBI" id="CHEBI:30616"/>
    </ligand>
</feature>
<feature type="binding site" evidence="1">
    <location>
        <position position="285"/>
    </location>
    <ligand>
        <name>L-serine</name>
        <dbReference type="ChEBI" id="CHEBI:33384"/>
    </ligand>
</feature>
<feature type="binding site" evidence="1">
    <location>
        <begin position="349"/>
        <end position="352"/>
    </location>
    <ligand>
        <name>ATP</name>
        <dbReference type="ChEBI" id="CHEBI:30616"/>
    </ligand>
</feature>
<feature type="binding site" evidence="1">
    <location>
        <position position="385"/>
    </location>
    <ligand>
        <name>L-serine</name>
        <dbReference type="ChEBI" id="CHEBI:33384"/>
    </ligand>
</feature>
<name>SYS_STAHJ</name>
<accession>Q4LAK8</accession>
<gene>
    <name evidence="1" type="primary">serS</name>
    <name type="ordered locus">SH0008</name>
</gene>
<proteinExistence type="inferred from homology"/>
<sequence length="428" mass="48739">MLDIKLFREQADTVKSKIELRGDDPKVVDEVLELDNERRQLIGKTEEMKARRNKVSEEIAEKKRNKENADDVIKEMRELGDEIKENDAKLNEVDNKVRDILIRIPNLIAEDVPQGDSDEENVEVKKWGTPREFDFEPKAHWDLVEELKMADFERAAKISGARFVYLTKDGALLERALMNYMLTKHTTQHGYTEMMTPQLVNADTMFGTGQLPKFEEDLFKVEKEGLYTIPTAEVPLTNFYRDEIIQPGVLPEKFTAQTACFRSEAGSAGRDTRGLIRLHQFDKVEMVRIEKPEDSWDALEDMTQNAEAILEELGLPYRRVILCTGDIGFSASKTYDLEVWLPSYDNYKEISSCSNCTDFQARRANIRFKRDAASKPELAHTLNGSGLAVGRTFAAIVENYQNADGSITIPEALVPFMGGKTEIRPVND</sequence>
<dbReference type="EC" id="6.1.1.11" evidence="1"/>
<dbReference type="EMBL" id="AP006716">
    <property type="protein sequence ID" value="BAE03317.1"/>
    <property type="molecule type" value="Genomic_DNA"/>
</dbReference>
<dbReference type="RefSeq" id="WP_011274366.1">
    <property type="nucleotide sequence ID" value="NC_007168.1"/>
</dbReference>
<dbReference type="SMR" id="Q4LAK8"/>
<dbReference type="KEGG" id="sha:SH0008"/>
<dbReference type="eggNOG" id="COG0172">
    <property type="taxonomic scope" value="Bacteria"/>
</dbReference>
<dbReference type="HOGENOM" id="CLU_023797_1_1_9"/>
<dbReference type="OrthoDB" id="9804647at2"/>
<dbReference type="UniPathway" id="UPA00906">
    <property type="reaction ID" value="UER00895"/>
</dbReference>
<dbReference type="Proteomes" id="UP000000543">
    <property type="component" value="Chromosome"/>
</dbReference>
<dbReference type="GO" id="GO:0005737">
    <property type="term" value="C:cytoplasm"/>
    <property type="evidence" value="ECO:0007669"/>
    <property type="project" value="UniProtKB-SubCell"/>
</dbReference>
<dbReference type="GO" id="GO:0005524">
    <property type="term" value="F:ATP binding"/>
    <property type="evidence" value="ECO:0007669"/>
    <property type="project" value="UniProtKB-UniRule"/>
</dbReference>
<dbReference type="GO" id="GO:0140096">
    <property type="term" value="F:catalytic activity, acting on a protein"/>
    <property type="evidence" value="ECO:0007669"/>
    <property type="project" value="UniProtKB-ARBA"/>
</dbReference>
<dbReference type="GO" id="GO:0004828">
    <property type="term" value="F:serine-tRNA ligase activity"/>
    <property type="evidence" value="ECO:0007669"/>
    <property type="project" value="UniProtKB-UniRule"/>
</dbReference>
<dbReference type="GO" id="GO:0016740">
    <property type="term" value="F:transferase activity"/>
    <property type="evidence" value="ECO:0007669"/>
    <property type="project" value="UniProtKB-ARBA"/>
</dbReference>
<dbReference type="GO" id="GO:0016260">
    <property type="term" value="P:selenocysteine biosynthetic process"/>
    <property type="evidence" value="ECO:0007669"/>
    <property type="project" value="UniProtKB-UniRule"/>
</dbReference>
<dbReference type="GO" id="GO:0006434">
    <property type="term" value="P:seryl-tRNA aminoacylation"/>
    <property type="evidence" value="ECO:0007669"/>
    <property type="project" value="UniProtKB-UniRule"/>
</dbReference>
<dbReference type="CDD" id="cd00770">
    <property type="entry name" value="SerRS_core"/>
    <property type="match status" value="1"/>
</dbReference>
<dbReference type="Gene3D" id="3.30.930.10">
    <property type="entry name" value="Bira Bifunctional Protein, Domain 2"/>
    <property type="match status" value="1"/>
</dbReference>
<dbReference type="Gene3D" id="1.10.287.40">
    <property type="entry name" value="Serine-tRNA synthetase, tRNA binding domain"/>
    <property type="match status" value="1"/>
</dbReference>
<dbReference type="HAMAP" id="MF_00176">
    <property type="entry name" value="Ser_tRNA_synth_type1"/>
    <property type="match status" value="1"/>
</dbReference>
<dbReference type="InterPro" id="IPR002314">
    <property type="entry name" value="aa-tRNA-synt_IIb"/>
</dbReference>
<dbReference type="InterPro" id="IPR006195">
    <property type="entry name" value="aa-tRNA-synth_II"/>
</dbReference>
<dbReference type="InterPro" id="IPR045864">
    <property type="entry name" value="aa-tRNA-synth_II/BPL/LPL"/>
</dbReference>
<dbReference type="InterPro" id="IPR002317">
    <property type="entry name" value="Ser-tRNA-ligase_type_1"/>
</dbReference>
<dbReference type="InterPro" id="IPR015866">
    <property type="entry name" value="Ser-tRNA-synth_1_N"/>
</dbReference>
<dbReference type="InterPro" id="IPR042103">
    <property type="entry name" value="SerRS_1_N_sf"/>
</dbReference>
<dbReference type="InterPro" id="IPR033729">
    <property type="entry name" value="SerRS_core"/>
</dbReference>
<dbReference type="InterPro" id="IPR010978">
    <property type="entry name" value="tRNA-bd_arm"/>
</dbReference>
<dbReference type="NCBIfam" id="TIGR00414">
    <property type="entry name" value="serS"/>
    <property type="match status" value="1"/>
</dbReference>
<dbReference type="PANTHER" id="PTHR43697:SF1">
    <property type="entry name" value="SERINE--TRNA LIGASE"/>
    <property type="match status" value="1"/>
</dbReference>
<dbReference type="PANTHER" id="PTHR43697">
    <property type="entry name" value="SERYL-TRNA SYNTHETASE"/>
    <property type="match status" value="1"/>
</dbReference>
<dbReference type="Pfam" id="PF02403">
    <property type="entry name" value="Seryl_tRNA_N"/>
    <property type="match status" value="1"/>
</dbReference>
<dbReference type="Pfam" id="PF00587">
    <property type="entry name" value="tRNA-synt_2b"/>
    <property type="match status" value="1"/>
</dbReference>
<dbReference type="PIRSF" id="PIRSF001529">
    <property type="entry name" value="Ser-tRNA-synth_IIa"/>
    <property type="match status" value="1"/>
</dbReference>
<dbReference type="PRINTS" id="PR00981">
    <property type="entry name" value="TRNASYNTHSER"/>
</dbReference>
<dbReference type="SUPFAM" id="SSF55681">
    <property type="entry name" value="Class II aaRS and biotin synthetases"/>
    <property type="match status" value="1"/>
</dbReference>
<dbReference type="SUPFAM" id="SSF46589">
    <property type="entry name" value="tRNA-binding arm"/>
    <property type="match status" value="1"/>
</dbReference>
<dbReference type="PROSITE" id="PS50862">
    <property type="entry name" value="AA_TRNA_LIGASE_II"/>
    <property type="match status" value="1"/>
</dbReference>
<comment type="function">
    <text evidence="1">Catalyzes the attachment of serine to tRNA(Ser). Is also able to aminoacylate tRNA(Sec) with serine, to form the misacylated tRNA L-seryl-tRNA(Sec), which will be further converted into selenocysteinyl-tRNA(Sec).</text>
</comment>
<comment type="catalytic activity">
    <reaction evidence="1">
        <text>tRNA(Ser) + L-serine + ATP = L-seryl-tRNA(Ser) + AMP + diphosphate + H(+)</text>
        <dbReference type="Rhea" id="RHEA:12292"/>
        <dbReference type="Rhea" id="RHEA-COMP:9669"/>
        <dbReference type="Rhea" id="RHEA-COMP:9703"/>
        <dbReference type="ChEBI" id="CHEBI:15378"/>
        <dbReference type="ChEBI" id="CHEBI:30616"/>
        <dbReference type="ChEBI" id="CHEBI:33019"/>
        <dbReference type="ChEBI" id="CHEBI:33384"/>
        <dbReference type="ChEBI" id="CHEBI:78442"/>
        <dbReference type="ChEBI" id="CHEBI:78533"/>
        <dbReference type="ChEBI" id="CHEBI:456215"/>
        <dbReference type="EC" id="6.1.1.11"/>
    </reaction>
</comment>
<comment type="catalytic activity">
    <reaction evidence="1">
        <text>tRNA(Sec) + L-serine + ATP = L-seryl-tRNA(Sec) + AMP + diphosphate + H(+)</text>
        <dbReference type="Rhea" id="RHEA:42580"/>
        <dbReference type="Rhea" id="RHEA-COMP:9742"/>
        <dbReference type="Rhea" id="RHEA-COMP:10128"/>
        <dbReference type="ChEBI" id="CHEBI:15378"/>
        <dbReference type="ChEBI" id="CHEBI:30616"/>
        <dbReference type="ChEBI" id="CHEBI:33019"/>
        <dbReference type="ChEBI" id="CHEBI:33384"/>
        <dbReference type="ChEBI" id="CHEBI:78442"/>
        <dbReference type="ChEBI" id="CHEBI:78533"/>
        <dbReference type="ChEBI" id="CHEBI:456215"/>
        <dbReference type="EC" id="6.1.1.11"/>
    </reaction>
</comment>
<comment type="pathway">
    <text evidence="1">Aminoacyl-tRNA biosynthesis; selenocysteinyl-tRNA(Sec) biosynthesis; L-seryl-tRNA(Sec) from L-serine and tRNA(Sec): step 1/1.</text>
</comment>
<comment type="subunit">
    <text evidence="1">Homodimer. The tRNA molecule binds across the dimer.</text>
</comment>
<comment type="subcellular location">
    <subcellularLocation>
        <location evidence="1">Cytoplasm</location>
    </subcellularLocation>
</comment>
<comment type="domain">
    <text evidence="1">Consists of two distinct domains, a catalytic core and a N-terminal extension that is involved in tRNA binding.</text>
</comment>
<comment type="similarity">
    <text evidence="1">Belongs to the class-II aminoacyl-tRNA synthetase family. Type-1 seryl-tRNA synthetase subfamily.</text>
</comment>
<keyword id="KW-0030">Aminoacyl-tRNA synthetase</keyword>
<keyword id="KW-0067">ATP-binding</keyword>
<keyword id="KW-0963">Cytoplasm</keyword>
<keyword id="KW-0436">Ligase</keyword>
<keyword id="KW-0547">Nucleotide-binding</keyword>
<keyword id="KW-0648">Protein biosynthesis</keyword>
<organism>
    <name type="scientific">Staphylococcus haemolyticus (strain JCSC1435)</name>
    <dbReference type="NCBI Taxonomy" id="279808"/>
    <lineage>
        <taxon>Bacteria</taxon>
        <taxon>Bacillati</taxon>
        <taxon>Bacillota</taxon>
        <taxon>Bacilli</taxon>
        <taxon>Bacillales</taxon>
        <taxon>Staphylococcaceae</taxon>
        <taxon>Staphylococcus</taxon>
    </lineage>
</organism>
<reference key="1">
    <citation type="journal article" date="2005" name="J. Bacteriol.">
        <title>Whole-genome sequencing of Staphylococcus haemolyticus uncovers the extreme plasticity of its genome and the evolution of human-colonizing staphylococcal species.</title>
        <authorList>
            <person name="Takeuchi F."/>
            <person name="Watanabe S."/>
            <person name="Baba T."/>
            <person name="Yuzawa H."/>
            <person name="Ito T."/>
            <person name="Morimoto Y."/>
            <person name="Kuroda M."/>
            <person name="Cui L."/>
            <person name="Takahashi M."/>
            <person name="Ankai A."/>
            <person name="Baba S."/>
            <person name="Fukui S."/>
            <person name="Lee J.C."/>
            <person name="Hiramatsu K."/>
        </authorList>
    </citation>
    <scope>NUCLEOTIDE SEQUENCE [LARGE SCALE GENOMIC DNA]</scope>
    <source>
        <strain>JCSC1435</strain>
    </source>
</reference>
<evidence type="ECO:0000255" key="1">
    <source>
        <dbReference type="HAMAP-Rule" id="MF_00176"/>
    </source>
</evidence>
<protein>
    <recommendedName>
        <fullName evidence="1">Serine--tRNA ligase</fullName>
        <ecNumber evidence="1">6.1.1.11</ecNumber>
    </recommendedName>
    <alternativeName>
        <fullName evidence="1">Seryl-tRNA synthetase</fullName>
        <shortName evidence="1">SerRS</shortName>
    </alternativeName>
    <alternativeName>
        <fullName evidence="1">Seryl-tRNA(Ser/Sec) synthetase</fullName>
    </alternativeName>
</protein>